<proteinExistence type="evidence at protein level"/>
<accession>Q9CQT2</accession>
<accession>Q3UB91</accession>
<accession>Q7TQE3</accession>
<keyword id="KW-0007">Acetylation</keyword>
<keyword id="KW-0469">Meiosis</keyword>
<keyword id="KW-0488">Methylation</keyword>
<keyword id="KW-0539">Nucleus</keyword>
<keyword id="KW-0597">Phosphoprotein</keyword>
<keyword id="KW-1185">Reference proteome</keyword>
<keyword id="KW-0694">RNA-binding</keyword>
<organism>
    <name type="scientific">Mus musculus</name>
    <name type="common">Mouse</name>
    <dbReference type="NCBI Taxonomy" id="10090"/>
    <lineage>
        <taxon>Eukaryota</taxon>
        <taxon>Metazoa</taxon>
        <taxon>Chordata</taxon>
        <taxon>Craniata</taxon>
        <taxon>Vertebrata</taxon>
        <taxon>Euteleostomi</taxon>
        <taxon>Mammalia</taxon>
        <taxon>Eutheria</taxon>
        <taxon>Euarchontoglires</taxon>
        <taxon>Glires</taxon>
        <taxon>Rodentia</taxon>
        <taxon>Myomorpha</taxon>
        <taxon>Muroidea</taxon>
        <taxon>Muridae</taxon>
        <taxon>Murinae</taxon>
        <taxon>Mus</taxon>
        <taxon>Mus</taxon>
    </lineage>
</organism>
<reference key="1">
    <citation type="submission" date="2001-12" db="EMBL/GenBank/DDBJ databases">
        <title>RNA binding motif protein 7, a novel ubiquitous protein involved in pre-mRNA processing during male meiosis.</title>
        <authorList>
            <person name="Guo T.B."/>
            <person name="Kato M.V."/>
            <person name="Boros L.G."/>
            <person name="Chan K.C."/>
            <person name="Sinha Hikim A.P."/>
            <person name="Hudson A.P."/>
            <person name="Swerdloff R.S."/>
            <person name="Mitchell A.P."/>
            <person name="Lin R.-J."/>
            <person name="Salameh W.A."/>
        </authorList>
    </citation>
    <scope>NUCLEOTIDE SEQUENCE [MRNA]</scope>
    <source>
        <strain>C57BL/6J</strain>
    </source>
</reference>
<reference key="2">
    <citation type="journal article" date="2005" name="Science">
        <title>The transcriptional landscape of the mammalian genome.</title>
        <authorList>
            <person name="Carninci P."/>
            <person name="Kasukawa T."/>
            <person name="Katayama S."/>
            <person name="Gough J."/>
            <person name="Frith M.C."/>
            <person name="Maeda N."/>
            <person name="Oyama R."/>
            <person name="Ravasi T."/>
            <person name="Lenhard B."/>
            <person name="Wells C."/>
            <person name="Kodzius R."/>
            <person name="Shimokawa K."/>
            <person name="Bajic V.B."/>
            <person name="Brenner S.E."/>
            <person name="Batalov S."/>
            <person name="Forrest A.R."/>
            <person name="Zavolan M."/>
            <person name="Davis M.J."/>
            <person name="Wilming L.G."/>
            <person name="Aidinis V."/>
            <person name="Allen J.E."/>
            <person name="Ambesi-Impiombato A."/>
            <person name="Apweiler R."/>
            <person name="Aturaliya R.N."/>
            <person name="Bailey T.L."/>
            <person name="Bansal M."/>
            <person name="Baxter L."/>
            <person name="Beisel K.W."/>
            <person name="Bersano T."/>
            <person name="Bono H."/>
            <person name="Chalk A.M."/>
            <person name="Chiu K.P."/>
            <person name="Choudhary V."/>
            <person name="Christoffels A."/>
            <person name="Clutterbuck D.R."/>
            <person name="Crowe M.L."/>
            <person name="Dalla E."/>
            <person name="Dalrymple B.P."/>
            <person name="de Bono B."/>
            <person name="Della Gatta G."/>
            <person name="di Bernardo D."/>
            <person name="Down T."/>
            <person name="Engstrom P."/>
            <person name="Fagiolini M."/>
            <person name="Faulkner G."/>
            <person name="Fletcher C.F."/>
            <person name="Fukushima T."/>
            <person name="Furuno M."/>
            <person name="Futaki S."/>
            <person name="Gariboldi M."/>
            <person name="Georgii-Hemming P."/>
            <person name="Gingeras T.R."/>
            <person name="Gojobori T."/>
            <person name="Green R.E."/>
            <person name="Gustincich S."/>
            <person name="Harbers M."/>
            <person name="Hayashi Y."/>
            <person name="Hensch T.K."/>
            <person name="Hirokawa N."/>
            <person name="Hill D."/>
            <person name="Huminiecki L."/>
            <person name="Iacono M."/>
            <person name="Ikeo K."/>
            <person name="Iwama A."/>
            <person name="Ishikawa T."/>
            <person name="Jakt M."/>
            <person name="Kanapin A."/>
            <person name="Katoh M."/>
            <person name="Kawasawa Y."/>
            <person name="Kelso J."/>
            <person name="Kitamura H."/>
            <person name="Kitano H."/>
            <person name="Kollias G."/>
            <person name="Krishnan S.P."/>
            <person name="Kruger A."/>
            <person name="Kummerfeld S.K."/>
            <person name="Kurochkin I.V."/>
            <person name="Lareau L.F."/>
            <person name="Lazarevic D."/>
            <person name="Lipovich L."/>
            <person name="Liu J."/>
            <person name="Liuni S."/>
            <person name="McWilliam S."/>
            <person name="Madan Babu M."/>
            <person name="Madera M."/>
            <person name="Marchionni L."/>
            <person name="Matsuda H."/>
            <person name="Matsuzawa S."/>
            <person name="Miki H."/>
            <person name="Mignone F."/>
            <person name="Miyake S."/>
            <person name="Morris K."/>
            <person name="Mottagui-Tabar S."/>
            <person name="Mulder N."/>
            <person name="Nakano N."/>
            <person name="Nakauchi H."/>
            <person name="Ng P."/>
            <person name="Nilsson R."/>
            <person name="Nishiguchi S."/>
            <person name="Nishikawa S."/>
            <person name="Nori F."/>
            <person name="Ohara O."/>
            <person name="Okazaki Y."/>
            <person name="Orlando V."/>
            <person name="Pang K.C."/>
            <person name="Pavan W.J."/>
            <person name="Pavesi G."/>
            <person name="Pesole G."/>
            <person name="Petrovsky N."/>
            <person name="Piazza S."/>
            <person name="Reed J."/>
            <person name="Reid J.F."/>
            <person name="Ring B.Z."/>
            <person name="Ringwald M."/>
            <person name="Rost B."/>
            <person name="Ruan Y."/>
            <person name="Salzberg S.L."/>
            <person name="Sandelin A."/>
            <person name="Schneider C."/>
            <person name="Schoenbach C."/>
            <person name="Sekiguchi K."/>
            <person name="Semple C.A."/>
            <person name="Seno S."/>
            <person name="Sessa L."/>
            <person name="Sheng Y."/>
            <person name="Shibata Y."/>
            <person name="Shimada H."/>
            <person name="Shimada K."/>
            <person name="Silva D."/>
            <person name="Sinclair B."/>
            <person name="Sperling S."/>
            <person name="Stupka E."/>
            <person name="Sugiura K."/>
            <person name="Sultana R."/>
            <person name="Takenaka Y."/>
            <person name="Taki K."/>
            <person name="Tammoja K."/>
            <person name="Tan S.L."/>
            <person name="Tang S."/>
            <person name="Taylor M.S."/>
            <person name="Tegner J."/>
            <person name="Teichmann S.A."/>
            <person name="Ueda H.R."/>
            <person name="van Nimwegen E."/>
            <person name="Verardo R."/>
            <person name="Wei C.L."/>
            <person name="Yagi K."/>
            <person name="Yamanishi H."/>
            <person name="Zabarovsky E."/>
            <person name="Zhu S."/>
            <person name="Zimmer A."/>
            <person name="Hide W."/>
            <person name="Bult C."/>
            <person name="Grimmond S.M."/>
            <person name="Teasdale R.D."/>
            <person name="Liu E.T."/>
            <person name="Brusic V."/>
            <person name="Quackenbush J."/>
            <person name="Wahlestedt C."/>
            <person name="Mattick J.S."/>
            <person name="Hume D.A."/>
            <person name="Kai C."/>
            <person name="Sasaki D."/>
            <person name="Tomaru Y."/>
            <person name="Fukuda S."/>
            <person name="Kanamori-Katayama M."/>
            <person name="Suzuki M."/>
            <person name="Aoki J."/>
            <person name="Arakawa T."/>
            <person name="Iida J."/>
            <person name="Imamura K."/>
            <person name="Itoh M."/>
            <person name="Kato T."/>
            <person name="Kawaji H."/>
            <person name="Kawagashira N."/>
            <person name="Kawashima T."/>
            <person name="Kojima M."/>
            <person name="Kondo S."/>
            <person name="Konno H."/>
            <person name="Nakano K."/>
            <person name="Ninomiya N."/>
            <person name="Nishio T."/>
            <person name="Okada M."/>
            <person name="Plessy C."/>
            <person name="Shibata K."/>
            <person name="Shiraki T."/>
            <person name="Suzuki S."/>
            <person name="Tagami M."/>
            <person name="Waki K."/>
            <person name="Watahiki A."/>
            <person name="Okamura-Oho Y."/>
            <person name="Suzuki H."/>
            <person name="Kawai J."/>
            <person name="Hayashizaki Y."/>
        </authorList>
    </citation>
    <scope>NUCLEOTIDE SEQUENCE [LARGE SCALE MRNA]</scope>
    <source>
        <strain>C57BL/6J</strain>
        <tissue>Bone marrow</tissue>
        <tissue>Cerebellum</tissue>
        <tissue>Stomach</tissue>
        <tissue>Testis</tissue>
    </source>
</reference>
<reference key="3">
    <citation type="journal article" date="2004" name="Genome Res.">
        <title>The status, quality, and expansion of the NIH full-length cDNA project: the Mammalian Gene Collection (MGC).</title>
        <authorList>
            <consortium name="The MGC Project Team"/>
        </authorList>
    </citation>
    <scope>NUCLEOTIDE SEQUENCE [LARGE SCALE MRNA]</scope>
    <source>
        <strain>C57BL/6J</strain>
        <tissue>Brain</tissue>
    </source>
</reference>
<reference key="4">
    <citation type="journal article" date="2010" name="Cell">
        <title>A tissue-specific atlas of mouse protein phosphorylation and expression.</title>
        <authorList>
            <person name="Huttlin E.L."/>
            <person name="Jedrychowski M.P."/>
            <person name="Elias J.E."/>
            <person name="Goswami T."/>
            <person name="Rad R."/>
            <person name="Beausoleil S.A."/>
            <person name="Villen J."/>
            <person name="Haas W."/>
            <person name="Sowa M.E."/>
            <person name="Gygi S.P."/>
        </authorList>
    </citation>
    <scope>PHOSPHORYLATION [LARGE SCALE ANALYSIS] AT SER-137</scope>
    <scope>IDENTIFICATION BY MASS SPECTROMETRY [LARGE SCALE ANALYSIS]</scope>
    <source>
        <tissue>Kidney</tissue>
        <tissue>Spleen</tissue>
        <tissue>Testis</tissue>
    </source>
</reference>
<reference key="5">
    <citation type="journal article" date="2015" name="RNA">
        <title>p38MAPK/MK2-mediated phosphorylation of RBM7 regulates the human nuclear exosome targeting complex.</title>
        <authorList>
            <person name="Tiedje C."/>
            <person name="Lubas M."/>
            <person name="Tehrani M."/>
            <person name="Menon M.B."/>
            <person name="Ronkina N."/>
            <person name="Rousseau S."/>
            <person name="Cohen P."/>
            <person name="Kotlyarov A."/>
            <person name="Gaestel M."/>
        </authorList>
    </citation>
    <scope>IDENTIFICATION BY MASS SPECTROMETRY</scope>
    <scope>PHOSPHORYLATION AT SER-136</scope>
    <scope>MUTAGENESIS OF SER-136</scope>
    <scope>SUBCELLULAR LOCATION</scope>
    <scope>INTERACTION WITH ZCCHC8</scope>
</reference>
<gene>
    <name evidence="6" type="primary">Rbm7</name>
</gene>
<sequence>MGAAAAEADRTLFVGNLETKVTEELLFELFHQAGPVIKVKIPKDKDGKLKQFAFVNFKHEVSVPYAMNLLNGIKLFGRPIKIQFRSGSSHASQDASVSYPQHHVGNLSPTSTSPNSYERTVGNVSPTAQMVQRSFSSPEDYQRQAVMNSVFRQMSYAGKFGSPHADQLGFSPSAQPHGHTFNQSSSSQWRQDALSSQRKRQNSHPYLADRHYSREQRYSDHGSDYHYRGSREDFYYDDRNHDGWSHDYDNRRDSSRGGKWPSSRH</sequence>
<comment type="function">
    <text evidence="1">RNA-binding subunit of the trimeric nuclear exosome targeting (NEXT) complex, a complex that functions as an RNA exosome cofactor that directs a subset of non-coding short-lived RNAs for exosomal degradation. NEXT is involved in surveillance and turnover of aberrant transcripts and non-coding RNAs. Binds preferentially polyuridine sequences and associates with newly synthesized RNAs, including pre-mRNAs and short-lived exosome substrates such as promoter upstream transcripts (PROMPTs), enhancer RNAs (eRNAs), and 3'-extended products from small nuclear RNAs (snRNAs). Participates in several biological processes including DNA damage response (DDR) and stress response. During stress response, activation of the p38MAPK-MK2 pathway decreases RBM7-RNA-binding and subsequently the RNA exosome degradation activities, thereby modulating the turnover of non-coding transcriptome. Participates in DNA damage response (DDR), through its interaction with MEPCE and LARP7, the core subunits of 7SK snRNP complex, that release the positive transcription elongation factor b (P-TEFb) complex from the 7SK snRNP. In turn, activation of P-TEFb complex induces the transcription of P-TEFb-dependent DDR genes to promote cell viability.</text>
</comment>
<comment type="subunit">
    <text evidence="1 4">Component of the nuclear exosome targeting (NEXT) complex composed of MTREX, ZCCHC8, and RBM7 that directs a subset of non-coding short-lived RNAs for exosomal degradation (PubMed:25525152). Interacts with ZCCHC8 and SF3B2/SAP145. Binds to MTREX through ZCCHC8. Interacts with YWHAE and YWHAZ; these interactions are stress-dependent and RBM7 phosphorylation dependent; release RNA from the NEXT complex and may affect RNA targeting to the nuclear RNA exosomome for degradation. Interacts with MEPCE and LARP7, the core subunits of 7SK snRNP; upon genotoxic stress this interaction is enhanced, triggering the release of inactive P-TEFb complex from the core and P-TEFb complex activation (By similarity).</text>
</comment>
<comment type="subcellular location">
    <subcellularLocation>
        <location evidence="1">Nucleus</location>
        <location evidence="1">Nucleoplasm</location>
    </subcellularLocation>
    <subcellularLocation>
        <location evidence="4">Nucleus</location>
    </subcellularLocation>
    <text evidence="1">Excluded from the nucleolus.</text>
</comment>
<comment type="domain">
    <text evidence="1">The RRM domain mediates RNA binding; the RNA must have four nucleotides for efficient binding. Mediates the interaction of NEXT complex with promoter upstream transcripts (PROMPTs) and potentially aberrant forms of other non coding RNAs, such as snRNAs. The RRM domain exhibits specificity for polyuridine sequences.</text>
</comment>
<comment type="PTM">
    <text evidence="1 4">Phosphorylated at Ser-136 by MAPK14/p38-alpha-activated MAPKAPK2/MK2; this phosphorylation is stress-dependent; this phosphorylation decreases its RNA-binding capacity therefore affecting RNA nuclear exosome-mediated degradation (PubMed:25525152). This phosphorylation mediates YWHAE and YWHAZ interactions (By similarity).</text>
</comment>
<dbReference type="EMBL" id="AF458961">
    <property type="protein sequence ID" value="AAL60585.1"/>
    <property type="molecule type" value="mRNA"/>
</dbReference>
<dbReference type="EMBL" id="AK005200">
    <property type="protein sequence ID" value="BAB23878.1"/>
    <property type="molecule type" value="mRNA"/>
</dbReference>
<dbReference type="EMBL" id="AK006755">
    <property type="protein sequence ID" value="BAB24729.1"/>
    <property type="molecule type" value="mRNA"/>
</dbReference>
<dbReference type="EMBL" id="AK008645">
    <property type="protein sequence ID" value="BAB25804.1"/>
    <property type="molecule type" value="mRNA"/>
</dbReference>
<dbReference type="EMBL" id="AK151056">
    <property type="protein sequence ID" value="BAE30073.1"/>
    <property type="molecule type" value="mRNA"/>
</dbReference>
<dbReference type="EMBL" id="BC054774">
    <property type="protein sequence ID" value="AAH54774.1"/>
    <property type="molecule type" value="mRNA"/>
</dbReference>
<dbReference type="CCDS" id="CCDS23155.1"/>
<dbReference type="RefSeq" id="NP_659197.2">
    <property type="nucleotide sequence ID" value="NM_144948.5"/>
</dbReference>
<dbReference type="BioGRID" id="211873">
    <property type="interactions" value="1"/>
</dbReference>
<dbReference type="FunCoup" id="Q9CQT2">
    <property type="interactions" value="3127"/>
</dbReference>
<dbReference type="IntAct" id="Q9CQT2">
    <property type="interactions" value="1"/>
</dbReference>
<dbReference type="STRING" id="10090.ENSMUSP00000126374"/>
<dbReference type="GlyGen" id="Q9CQT2">
    <property type="glycosylation" value="2 sites, 1 N-linked glycan (1 site), 1 O-linked glycan (1 site)"/>
</dbReference>
<dbReference type="iPTMnet" id="Q9CQT2"/>
<dbReference type="PhosphoSitePlus" id="Q9CQT2"/>
<dbReference type="jPOST" id="Q9CQT2"/>
<dbReference type="PaxDb" id="10090-ENSMUSP00000126374"/>
<dbReference type="ProteomicsDB" id="253182"/>
<dbReference type="Pumba" id="Q9CQT2"/>
<dbReference type="DNASU" id="67010"/>
<dbReference type="Ensembl" id="ENSMUST00000170000.4">
    <property type="protein sequence ID" value="ENSMUSP00000126374.3"/>
    <property type="gene ID" value="ENSMUSG00000042396.11"/>
</dbReference>
<dbReference type="GeneID" id="67010"/>
<dbReference type="KEGG" id="mmu:67010"/>
<dbReference type="UCSC" id="uc009pic.2">
    <property type="organism name" value="mouse"/>
</dbReference>
<dbReference type="AGR" id="MGI:1914260"/>
<dbReference type="CTD" id="10179"/>
<dbReference type="MGI" id="MGI:1914260">
    <property type="gene designation" value="Rbm7"/>
</dbReference>
<dbReference type="VEuPathDB" id="HostDB:ENSMUSG00000042396"/>
<dbReference type="eggNOG" id="KOG4454">
    <property type="taxonomic scope" value="Eukaryota"/>
</dbReference>
<dbReference type="GeneTree" id="ENSGT00870000136493"/>
<dbReference type="HOGENOM" id="CLU_087967_0_0_1"/>
<dbReference type="InParanoid" id="Q9CQT2"/>
<dbReference type="OMA" id="MRIQFRS"/>
<dbReference type="OrthoDB" id="407442at2759"/>
<dbReference type="PhylomeDB" id="Q9CQT2"/>
<dbReference type="TreeFam" id="TF323596"/>
<dbReference type="Reactome" id="R-MMU-72163">
    <property type="pathway name" value="mRNA Splicing - Major Pathway"/>
</dbReference>
<dbReference type="BioGRID-ORCS" id="67010">
    <property type="hits" value="11 hits in 77 CRISPR screens"/>
</dbReference>
<dbReference type="ChiTaRS" id="Rbm7">
    <property type="organism name" value="mouse"/>
</dbReference>
<dbReference type="PRO" id="PR:Q9CQT2"/>
<dbReference type="Proteomes" id="UP000000589">
    <property type="component" value="Chromosome 9"/>
</dbReference>
<dbReference type="RNAct" id="Q9CQT2">
    <property type="molecule type" value="protein"/>
</dbReference>
<dbReference type="Bgee" id="ENSMUSG00000042396">
    <property type="expression patterns" value="Expressed in humerus cartilage element and 253 other cell types or tissues"/>
</dbReference>
<dbReference type="ExpressionAtlas" id="Q9CQT2">
    <property type="expression patterns" value="baseline and differential"/>
</dbReference>
<dbReference type="GO" id="GO:0005654">
    <property type="term" value="C:nucleoplasm"/>
    <property type="evidence" value="ECO:0000250"/>
    <property type="project" value="UniProtKB"/>
</dbReference>
<dbReference type="GO" id="GO:0005634">
    <property type="term" value="C:nucleus"/>
    <property type="evidence" value="ECO:0000314"/>
    <property type="project" value="UniProtKB"/>
</dbReference>
<dbReference type="GO" id="GO:0071889">
    <property type="term" value="F:14-3-3 protein binding"/>
    <property type="evidence" value="ECO:0000250"/>
    <property type="project" value="UniProtKB"/>
</dbReference>
<dbReference type="GO" id="GO:0003723">
    <property type="term" value="F:RNA binding"/>
    <property type="evidence" value="ECO:0000250"/>
    <property type="project" value="UniProtKB"/>
</dbReference>
<dbReference type="GO" id="GO:0051321">
    <property type="term" value="P:meiotic cell cycle"/>
    <property type="evidence" value="ECO:0007669"/>
    <property type="project" value="UniProtKB-KW"/>
</dbReference>
<dbReference type="CDD" id="cd12592">
    <property type="entry name" value="RRM_RBM7"/>
    <property type="match status" value="1"/>
</dbReference>
<dbReference type="FunFam" id="3.30.70.330:FF:000261">
    <property type="entry name" value="RNA-binding motif protein 7"/>
    <property type="match status" value="1"/>
</dbReference>
<dbReference type="Gene3D" id="3.30.70.330">
    <property type="match status" value="1"/>
</dbReference>
<dbReference type="InterPro" id="IPR052285">
    <property type="entry name" value="NEXT_complex_subunit"/>
</dbReference>
<dbReference type="InterPro" id="IPR012677">
    <property type="entry name" value="Nucleotide-bd_a/b_plait_sf"/>
</dbReference>
<dbReference type="InterPro" id="IPR035979">
    <property type="entry name" value="RBD_domain_sf"/>
</dbReference>
<dbReference type="InterPro" id="IPR034500">
    <property type="entry name" value="RBM7_RRM"/>
</dbReference>
<dbReference type="InterPro" id="IPR000504">
    <property type="entry name" value="RRM_dom"/>
</dbReference>
<dbReference type="PANTHER" id="PTHR13798">
    <property type="entry name" value="RNA BINDING MOTIF RBM PROTEIN -RELATED"/>
    <property type="match status" value="1"/>
</dbReference>
<dbReference type="PANTHER" id="PTHR13798:SF4">
    <property type="entry name" value="RNA-BINDING PROTEIN 7"/>
    <property type="match status" value="1"/>
</dbReference>
<dbReference type="Pfam" id="PF00076">
    <property type="entry name" value="RRM_1"/>
    <property type="match status" value="1"/>
</dbReference>
<dbReference type="SMART" id="SM00360">
    <property type="entry name" value="RRM"/>
    <property type="match status" value="1"/>
</dbReference>
<dbReference type="SUPFAM" id="SSF54928">
    <property type="entry name" value="RNA-binding domain, RBD"/>
    <property type="match status" value="1"/>
</dbReference>
<dbReference type="PROSITE" id="PS50102">
    <property type="entry name" value="RRM"/>
    <property type="match status" value="1"/>
</dbReference>
<feature type="initiator methionine" description="Removed" evidence="1">
    <location>
        <position position="1"/>
    </location>
</feature>
<feature type="chain" id="PRO_0000081762" description="RNA-binding protein 7">
    <location>
        <begin position="2"/>
        <end position="265"/>
    </location>
</feature>
<feature type="domain" description="RRM" evidence="2">
    <location>
        <begin position="10"/>
        <end position="87"/>
    </location>
</feature>
<feature type="region of interest" description="ZCCHC8 binding" evidence="1">
    <location>
        <begin position="25"/>
        <end position="35"/>
    </location>
</feature>
<feature type="region of interest" description="ZCCHC8 binding" evidence="1">
    <location>
        <begin position="59"/>
        <end position="76"/>
    </location>
</feature>
<feature type="region of interest" description="Disordered" evidence="3">
    <location>
        <begin position="91"/>
        <end position="125"/>
    </location>
</feature>
<feature type="region of interest" description="Disordered" evidence="3">
    <location>
        <begin position="166"/>
        <end position="224"/>
    </location>
</feature>
<feature type="region of interest" description="Disordered" evidence="3">
    <location>
        <begin position="237"/>
        <end position="265"/>
    </location>
</feature>
<feature type="compositionally biased region" description="Polar residues" evidence="3">
    <location>
        <begin position="107"/>
        <end position="125"/>
    </location>
</feature>
<feature type="compositionally biased region" description="Polar residues" evidence="3">
    <location>
        <begin position="170"/>
        <end position="196"/>
    </location>
</feature>
<feature type="compositionally biased region" description="Basic and acidic residues" evidence="3">
    <location>
        <begin position="207"/>
        <end position="224"/>
    </location>
</feature>
<feature type="compositionally biased region" description="Basic and acidic residues" evidence="3">
    <location>
        <begin position="237"/>
        <end position="256"/>
    </location>
</feature>
<feature type="modified residue" description="N-acetylglycine" evidence="1">
    <location>
        <position position="2"/>
    </location>
</feature>
<feature type="modified residue" description="Phosphoserine; by MAPKAPK2" evidence="4">
    <location>
        <position position="136"/>
    </location>
</feature>
<feature type="modified residue" description="Phosphoserine" evidence="7">
    <location>
        <position position="137"/>
    </location>
</feature>
<feature type="modified residue" description="Omega-N-methylarginine" evidence="1">
    <location>
        <position position="152"/>
    </location>
</feature>
<feature type="modified residue" description="Phosphoserine" evidence="1">
    <location>
        <position position="203"/>
    </location>
</feature>
<feature type="mutagenesis site" description="Does not phosphorylated by MAPK14/p38-alpha-activated MAPKAPK2/MK2. Does not affect localization. Does not affect interaction with ZCCHC8." evidence="4">
    <original>S</original>
    <variation>A</variation>
    <location>
        <position position="136"/>
    </location>
</feature>
<feature type="sequence conflict" description="In Ref. 3; AAH54774." evidence="5" ref="3">
    <original>N</original>
    <variation>D</variation>
    <location>
        <position position="240"/>
    </location>
</feature>
<evidence type="ECO:0000250" key="1">
    <source>
        <dbReference type="UniProtKB" id="Q9Y580"/>
    </source>
</evidence>
<evidence type="ECO:0000255" key="2">
    <source>
        <dbReference type="PROSITE-ProRule" id="PRU00176"/>
    </source>
</evidence>
<evidence type="ECO:0000256" key="3">
    <source>
        <dbReference type="SAM" id="MobiDB-lite"/>
    </source>
</evidence>
<evidence type="ECO:0000269" key="4">
    <source>
    </source>
</evidence>
<evidence type="ECO:0000305" key="5"/>
<evidence type="ECO:0000312" key="6">
    <source>
        <dbReference type="MGI" id="MGI:1914260"/>
    </source>
</evidence>
<evidence type="ECO:0007744" key="7">
    <source>
    </source>
</evidence>
<name>RBM7_MOUSE</name>
<protein>
    <recommendedName>
        <fullName evidence="5">RNA-binding protein 7</fullName>
    </recommendedName>
    <alternativeName>
        <fullName evidence="6">RNA-binding motif protein 7</fullName>
    </alternativeName>
</protein>